<proteinExistence type="evidence at protein level"/>
<gene>
    <name evidence="2" type="primary">DDOST</name>
    <name type="synonym">OST48</name>
</gene>
<keyword id="KW-0002">3D-structure</keyword>
<keyword id="KW-0903">Direct protein sequencing</keyword>
<keyword id="KW-0256">Endoplasmic reticulum</keyword>
<keyword id="KW-0472">Membrane</keyword>
<keyword id="KW-1185">Reference proteome</keyword>
<keyword id="KW-0732">Signal</keyword>
<keyword id="KW-0812">Transmembrane</keyword>
<keyword id="KW-1133">Transmembrane helix</keyword>
<comment type="function">
    <text evidence="2 5">Subunit of the oligosaccharyl transferase (OST) complex that catalyzes the initial transfer of a defined glycan (Glc(3)Man(9)GlcNAc(2) in eukaryotes) from the lipid carrier dolichol-pyrophosphate to an asparagine residue within an Asn-X-Ser/Thr consensus motif in nascent polypeptide chains, the first step in protein N-glycosylation. N-glycosylation occurs cotranslationally and the complex associates with the Sec61 complex at the channel-forming translocon complex that mediates protein translocation across the endoplasmic reticulum (ER). All subunits are required for a maximal enzyme activity (PubMed:12887896). Required for the assembly of both SST3A- and SS3B-containing OST complexes (By similarity).</text>
</comment>
<comment type="pathway">
    <text evidence="2">Protein modification; protein glycosylation.</text>
</comment>
<comment type="subunit">
    <text evidence="2 5 6 7 8">Component of the oligosaccharyltransferase (OST) complex. OST exists in two different complex forms which contain common core subunits RPN1, RPN2, OST48, OST4, DAD1 and TMEM258, either STT3A or STT3B as catalytic subunits, and form-specific accessory subunits (PubMed:12887896, PubMed:15835887, PubMed:25135935). STT3A complex assembly occurs through the formation of 3 subcomplexes. Subcomplex 1 contains RPN1 and TMEM258, subcomplex 2 contains the STT3A-specific subunits STT3A, DC2/OSTC, and KCP2 as well as the core subunit OST4, and subcomplex 3 contains RPN2, DAD1, and OST48. The STT3A complex can form stable complexes with the Sec61 complex or with both the Sec61 and TRAP complexes (PubMed:15835887, PubMed:29519914). Interacts with SMIM22 (By similarity).</text>
</comment>
<comment type="subcellular location">
    <subcellularLocation>
        <location evidence="5">Endoplasmic reticulum</location>
    </subcellularLocation>
    <subcellularLocation>
        <location evidence="3">Endoplasmic reticulum membrane</location>
        <topology evidence="8">Single-pass type I membrane protein</topology>
    </subcellularLocation>
</comment>
<comment type="similarity">
    <text evidence="9">Belongs to the DDOST 48 kDa subunit family.</text>
</comment>
<comment type="caution">
    <text evidence="9">It is uncertain whether Met-1 or Met-7 is the initiator.</text>
</comment>
<accession>Q05052</accession>
<evidence type="ECO:0000250" key="1"/>
<evidence type="ECO:0000250" key="2">
    <source>
        <dbReference type="UniProtKB" id="P39656"/>
    </source>
</evidence>
<evidence type="ECO:0000250" key="3">
    <source>
        <dbReference type="UniProtKB" id="Q29381"/>
    </source>
</evidence>
<evidence type="ECO:0000255" key="4"/>
<evidence type="ECO:0000269" key="5">
    <source>
    </source>
</evidence>
<evidence type="ECO:0000269" key="6">
    <source>
    </source>
</evidence>
<evidence type="ECO:0000269" key="7">
    <source>
    </source>
</evidence>
<evidence type="ECO:0000269" key="8">
    <source>
    </source>
</evidence>
<evidence type="ECO:0000305" key="9"/>
<evidence type="ECO:0000305" key="10">
    <source>
    </source>
</evidence>
<reference key="1">
    <citation type="journal article" date="1992" name="J. Biol. Chem.">
        <title>The 48-kDa subunit of the mammalian oligosaccharyltransferase complex is homologous to the essential yeast protein WBP1.</title>
        <authorList>
            <person name="Silberstein S."/>
            <person name="Kelleher D.J."/>
            <person name="Gilmore R."/>
        </authorList>
    </citation>
    <scope>NUCLEOTIDE SEQUENCE [MRNA]</scope>
    <scope>PARTIAL PROTEIN SEQUENCE</scope>
    <source>
        <strain>Cocker spaniel</strain>
        <tissue>Kidney</tissue>
    </source>
</reference>
<reference key="2">
    <citation type="journal article" date="2003" name="Mol. Cell">
        <title>Oligosaccharyltransferase isoforms that contain different catalytic STT3 subunits have distinct enzymatic properties.</title>
        <authorList>
            <person name="Kelleher D.J."/>
            <person name="Karaoglu D."/>
            <person name="Mandon E.C."/>
            <person name="Gilmore R."/>
        </authorList>
    </citation>
    <scope>IDENTIFICATION IN THE OLIGOSACCHARYLTRANSFERASE (OST) COMPLEX</scope>
    <scope>FUNCTION OF THE OLIGOSACCHARYLTRANSFERASE (OST) COMPLEX</scope>
    <scope>SUBCELLULAR LOCATION</scope>
</reference>
<reference key="3">
    <citation type="journal article" date="2005" name="Biochemistry">
        <title>Proteomic analysis of mammalian oligosaccharyltransferase reveals multiple subcomplexes that contain Sec61, TRAP, and two potential new subunits.</title>
        <authorList>
            <person name="Shibatani T."/>
            <person name="David L.L."/>
            <person name="McCormack A.L."/>
            <person name="Frueh K."/>
            <person name="Skach W.R."/>
        </authorList>
    </citation>
    <scope>IDENTIFICATION IN THE OLIGOSACCHARYLTRANSFERASE COMPLEX</scope>
</reference>
<reference key="4">
    <citation type="journal article" date="2014" name="J. Cell Biol.">
        <title>Oxidoreductase activity is necessary for N-glycosylation of cysteine-proximal acceptor sites in glycoproteins.</title>
        <authorList>
            <person name="Cherepanova N.A."/>
            <person name="Shrimal S."/>
            <person name="Gilmore R."/>
        </authorList>
    </citation>
    <scope>IDENTIFICATION IN THE OLIGOSACCHARYLTRANSFERASE COMPLEX</scope>
</reference>
<reference key="5">
    <citation type="journal article" date="2018" name="Science">
        <title>Structural basis for coupling protein transport and N-glycosylation at the mammalian endoplasmic reticulum.</title>
        <authorList>
            <person name="Braunger K."/>
            <person name="Pfeffer S."/>
            <person name="Shrimal S."/>
            <person name="Gilmore R."/>
            <person name="Berninghausen O."/>
            <person name="Mandon E.C."/>
            <person name="Becker T."/>
            <person name="Foerster F."/>
            <person name="Beckmann R."/>
        </authorList>
    </citation>
    <scope>STRUCTURE BY ELECTRON MICROSCOPY (4.20 ANGSTROMS)</scope>
</reference>
<feature type="signal peptide" evidence="1">
    <location>
        <begin position="1"/>
        <end position="32"/>
    </location>
</feature>
<feature type="chain" id="PRO_0000021955" description="Dolichyl-diphosphooligosaccharide--protein glycosyltransferase 48 kDa subunit">
    <location>
        <begin position="33"/>
        <end position="445"/>
    </location>
</feature>
<feature type="topological domain" description="Lumenal" evidence="10">
    <location>
        <begin position="33"/>
        <end position="415"/>
    </location>
</feature>
<feature type="transmembrane region" description="Helical" evidence="4">
    <location>
        <begin position="416"/>
        <end position="436"/>
    </location>
</feature>
<feature type="topological domain" description="Cytoplasmic" evidence="10">
    <location>
        <begin position="437"/>
        <end position="445"/>
    </location>
</feature>
<dbReference type="EMBL" id="M98392">
    <property type="protein sequence ID" value="AAA30880.1"/>
    <property type="molecule type" value="mRNA"/>
</dbReference>
<dbReference type="PIR" id="A45139">
    <property type="entry name" value="A45139"/>
</dbReference>
<dbReference type="RefSeq" id="NP_001003321.1">
    <property type="nucleotide sequence ID" value="NM_001003321.1"/>
</dbReference>
<dbReference type="PDB" id="6FTG">
    <property type="method" value="EM"/>
    <property type="resolution" value="9.10 A"/>
    <property type="chains" value="7=-"/>
</dbReference>
<dbReference type="PDB" id="6FTI">
    <property type="method" value="EM"/>
    <property type="resolution" value="4.20 A"/>
    <property type="chains" value="7=-"/>
</dbReference>
<dbReference type="PDB" id="6FTJ">
    <property type="method" value="EM"/>
    <property type="resolution" value="4.70 A"/>
    <property type="chains" value="7=-"/>
</dbReference>
<dbReference type="PDBsum" id="6FTG"/>
<dbReference type="PDBsum" id="6FTI"/>
<dbReference type="PDBsum" id="6FTJ"/>
<dbReference type="SMR" id="Q05052"/>
<dbReference type="CORUM" id="Q05052"/>
<dbReference type="FunCoup" id="Q05052">
    <property type="interactions" value="2763"/>
</dbReference>
<dbReference type="IntAct" id="Q05052">
    <property type="interactions" value="1"/>
</dbReference>
<dbReference type="STRING" id="9615.ENSCAFP00000065783"/>
<dbReference type="PaxDb" id="9612-ENSCAFP00000022169"/>
<dbReference type="GeneID" id="404012"/>
<dbReference type="KEGG" id="cfa:404012"/>
<dbReference type="CTD" id="1650"/>
<dbReference type="eggNOG" id="KOG2754">
    <property type="taxonomic scope" value="Eukaryota"/>
</dbReference>
<dbReference type="InParanoid" id="Q05052"/>
<dbReference type="OrthoDB" id="29105at2759"/>
<dbReference type="UniPathway" id="UPA00378"/>
<dbReference type="Proteomes" id="UP000002254">
    <property type="component" value="Unplaced"/>
</dbReference>
<dbReference type="Proteomes" id="UP000694429">
    <property type="component" value="Unplaced"/>
</dbReference>
<dbReference type="Proteomes" id="UP000694542">
    <property type="component" value="Unplaced"/>
</dbReference>
<dbReference type="Proteomes" id="UP000805418">
    <property type="component" value="Unplaced"/>
</dbReference>
<dbReference type="GO" id="GO:0008250">
    <property type="term" value="C:oligosaccharyltransferase complex"/>
    <property type="evidence" value="ECO:0000314"/>
    <property type="project" value="UniProtKB"/>
</dbReference>
<dbReference type="GO" id="GO:0006486">
    <property type="term" value="P:protein glycosylation"/>
    <property type="evidence" value="ECO:0000314"/>
    <property type="project" value="UniProtKB"/>
</dbReference>
<dbReference type="GO" id="GO:0018279">
    <property type="term" value="P:protein N-linked glycosylation via asparagine"/>
    <property type="evidence" value="ECO:0000318"/>
    <property type="project" value="GO_Central"/>
</dbReference>
<dbReference type="InterPro" id="IPR005013">
    <property type="entry name" value="DDOST_48_kDa_subunit"/>
</dbReference>
<dbReference type="InterPro" id="IPR055459">
    <property type="entry name" value="OST48_MD"/>
</dbReference>
<dbReference type="InterPro" id="IPR055457">
    <property type="entry name" value="OST48_N"/>
</dbReference>
<dbReference type="PANTHER" id="PTHR10830">
    <property type="entry name" value="DOLICHYL-DIPHOSPHOOLIGOSACCHARIDE--PROTEIN GLYCOSYLTRANSFERASE 48 KDA SUBUNIT"/>
    <property type="match status" value="1"/>
</dbReference>
<dbReference type="PANTHER" id="PTHR10830:SF0">
    <property type="entry name" value="DOLICHYL-DIPHOSPHOOLIGOSACCHARIDE--PROTEIN GLYCOSYLTRANSFERASE 48 KDA SUBUNIT"/>
    <property type="match status" value="1"/>
</dbReference>
<dbReference type="Pfam" id="PF23358">
    <property type="entry name" value="OST48_MD"/>
    <property type="match status" value="1"/>
</dbReference>
<dbReference type="Pfam" id="PF03345">
    <property type="entry name" value="OST48_N"/>
    <property type="match status" value="1"/>
</dbReference>
<sequence>MRRRRKMEAGAAARAWSLLWLLLPLLGPVCASGPRTLVLLDNLNLRETHSLFFRSLKDRAFELTFKTADDPSLSLIKYGEFLYDNLIIFSPSVEDFGGNINVETISTFIDGGGSVLVAASSDIGDPLRELGSECGIEFDEEKTAVIDHHNYDVSDLGQHTLIVADPENLLKAPTIVGRSSLNPILFRGVGMVADPDNPLVLDILTGSSTSYSFFPDKPITQYPHAVGKNTLLIAGLQARNNARVVFSGSLDFFSDAFFNSAVQKAAPGSQRYSQTGNYELAVALSRWVFKEEGVLRVGPVSHHRVGETAPPNAYTVTDLVEYSIVIEQLSNGRWVPFDGDDIQLEFVRIDPFVRTFLKKKGGKYSVQFKLPDVYGVFQFKVDYNRLGYTHLHSSTQVSVRPLQHTQYERFIPSAYPYYASAFSMMLGLFIFSTVFLHMKEKEKSD</sequence>
<organism>
    <name type="scientific">Canis lupus familiaris</name>
    <name type="common">Dog</name>
    <name type="synonym">Canis familiaris</name>
    <dbReference type="NCBI Taxonomy" id="9615"/>
    <lineage>
        <taxon>Eukaryota</taxon>
        <taxon>Metazoa</taxon>
        <taxon>Chordata</taxon>
        <taxon>Craniata</taxon>
        <taxon>Vertebrata</taxon>
        <taxon>Euteleostomi</taxon>
        <taxon>Mammalia</taxon>
        <taxon>Eutheria</taxon>
        <taxon>Laurasiatheria</taxon>
        <taxon>Carnivora</taxon>
        <taxon>Caniformia</taxon>
        <taxon>Canidae</taxon>
        <taxon>Canis</taxon>
    </lineage>
</organism>
<name>OST48_CANLF</name>
<protein>
    <recommendedName>
        <fullName evidence="2">Dolichyl-diphosphooligosaccharide--protein glycosyltransferase 48 kDa subunit</fullName>
        <shortName>DDOST 48 kDa subunit</shortName>
        <shortName>Oligosaccharyl transferase 48 kDa subunit</shortName>
    </recommendedName>
</protein>